<organism>
    <name type="scientific">Rhizobium johnstonii (strain DSM 114642 / LMG 32736 / 3841)</name>
    <name type="common">Rhizobium leguminosarum bv. viciae</name>
    <dbReference type="NCBI Taxonomy" id="216596"/>
    <lineage>
        <taxon>Bacteria</taxon>
        <taxon>Pseudomonadati</taxon>
        <taxon>Pseudomonadota</taxon>
        <taxon>Alphaproteobacteria</taxon>
        <taxon>Hyphomicrobiales</taxon>
        <taxon>Rhizobiaceae</taxon>
        <taxon>Rhizobium/Agrobacterium group</taxon>
        <taxon>Rhizobium</taxon>
        <taxon>Rhizobium johnstonii</taxon>
    </lineage>
</organism>
<reference key="1">
    <citation type="journal article" date="2006" name="Genome Biol.">
        <title>The genome of Rhizobium leguminosarum has recognizable core and accessory components.</title>
        <authorList>
            <person name="Young J.P.W."/>
            <person name="Crossman L.C."/>
            <person name="Johnston A.W.B."/>
            <person name="Thomson N.R."/>
            <person name="Ghazoui Z.F."/>
            <person name="Hull K.H."/>
            <person name="Wexler M."/>
            <person name="Curson A.R.J."/>
            <person name="Todd J.D."/>
            <person name="Poole P.S."/>
            <person name="Mauchline T.H."/>
            <person name="East A.K."/>
            <person name="Quail M.A."/>
            <person name="Churcher C."/>
            <person name="Arrowsmith C."/>
            <person name="Cherevach I."/>
            <person name="Chillingworth T."/>
            <person name="Clarke K."/>
            <person name="Cronin A."/>
            <person name="Davis P."/>
            <person name="Fraser A."/>
            <person name="Hance Z."/>
            <person name="Hauser H."/>
            <person name="Jagels K."/>
            <person name="Moule S."/>
            <person name="Mungall K."/>
            <person name="Norbertczak H."/>
            <person name="Rabbinowitsch E."/>
            <person name="Sanders M."/>
            <person name="Simmonds M."/>
            <person name="Whitehead S."/>
            <person name="Parkhill J."/>
        </authorList>
    </citation>
    <scope>NUCLEOTIDE SEQUENCE [LARGE SCALE GENOMIC DNA]</scope>
    <source>
        <strain>DSM 114642 / LMG 32736 / 3841</strain>
    </source>
</reference>
<name>MURC_RHIJ3</name>
<gene>
    <name evidence="1" type="primary">murC</name>
    <name type="ordered locus">RL3306</name>
</gene>
<feature type="chain" id="PRO_0000336861" description="UDP-N-acetylmuramate--L-alanine ligase">
    <location>
        <begin position="1"/>
        <end position="471"/>
    </location>
</feature>
<feature type="binding site" evidence="1">
    <location>
        <begin position="114"/>
        <end position="120"/>
    </location>
    <ligand>
        <name>ATP</name>
        <dbReference type="ChEBI" id="CHEBI:30616"/>
    </ligand>
</feature>
<dbReference type="EC" id="6.3.2.8" evidence="1"/>
<dbReference type="EMBL" id="AM236080">
    <property type="protein sequence ID" value="CAK08793.1"/>
    <property type="molecule type" value="Genomic_DNA"/>
</dbReference>
<dbReference type="RefSeq" id="WP_011652796.1">
    <property type="nucleotide sequence ID" value="NC_008380.1"/>
</dbReference>
<dbReference type="SMR" id="Q1ME34"/>
<dbReference type="EnsemblBacteria" id="CAK08793">
    <property type="protein sequence ID" value="CAK08793"/>
    <property type="gene ID" value="RL3306"/>
</dbReference>
<dbReference type="KEGG" id="rle:RL3306"/>
<dbReference type="eggNOG" id="COG0773">
    <property type="taxonomic scope" value="Bacteria"/>
</dbReference>
<dbReference type="HOGENOM" id="CLU_028104_2_2_5"/>
<dbReference type="UniPathway" id="UPA00219"/>
<dbReference type="Proteomes" id="UP000006575">
    <property type="component" value="Chromosome"/>
</dbReference>
<dbReference type="GO" id="GO:0005737">
    <property type="term" value="C:cytoplasm"/>
    <property type="evidence" value="ECO:0007669"/>
    <property type="project" value="UniProtKB-SubCell"/>
</dbReference>
<dbReference type="GO" id="GO:0005524">
    <property type="term" value="F:ATP binding"/>
    <property type="evidence" value="ECO:0007669"/>
    <property type="project" value="UniProtKB-UniRule"/>
</dbReference>
<dbReference type="GO" id="GO:0008763">
    <property type="term" value="F:UDP-N-acetylmuramate-L-alanine ligase activity"/>
    <property type="evidence" value="ECO:0007669"/>
    <property type="project" value="UniProtKB-UniRule"/>
</dbReference>
<dbReference type="GO" id="GO:0051301">
    <property type="term" value="P:cell division"/>
    <property type="evidence" value="ECO:0007669"/>
    <property type="project" value="UniProtKB-KW"/>
</dbReference>
<dbReference type="GO" id="GO:0071555">
    <property type="term" value="P:cell wall organization"/>
    <property type="evidence" value="ECO:0007669"/>
    <property type="project" value="UniProtKB-KW"/>
</dbReference>
<dbReference type="GO" id="GO:0009252">
    <property type="term" value="P:peptidoglycan biosynthetic process"/>
    <property type="evidence" value="ECO:0007669"/>
    <property type="project" value="UniProtKB-UniRule"/>
</dbReference>
<dbReference type="GO" id="GO:0008360">
    <property type="term" value="P:regulation of cell shape"/>
    <property type="evidence" value="ECO:0007669"/>
    <property type="project" value="UniProtKB-KW"/>
</dbReference>
<dbReference type="Gene3D" id="3.90.190.20">
    <property type="entry name" value="Mur ligase, C-terminal domain"/>
    <property type="match status" value="1"/>
</dbReference>
<dbReference type="Gene3D" id="3.40.1190.10">
    <property type="entry name" value="Mur-like, catalytic domain"/>
    <property type="match status" value="1"/>
</dbReference>
<dbReference type="Gene3D" id="3.40.50.720">
    <property type="entry name" value="NAD(P)-binding Rossmann-like Domain"/>
    <property type="match status" value="1"/>
</dbReference>
<dbReference type="HAMAP" id="MF_00046">
    <property type="entry name" value="MurC"/>
    <property type="match status" value="1"/>
</dbReference>
<dbReference type="InterPro" id="IPR036565">
    <property type="entry name" value="Mur-like_cat_sf"/>
</dbReference>
<dbReference type="InterPro" id="IPR004101">
    <property type="entry name" value="Mur_ligase_C"/>
</dbReference>
<dbReference type="InterPro" id="IPR036615">
    <property type="entry name" value="Mur_ligase_C_dom_sf"/>
</dbReference>
<dbReference type="InterPro" id="IPR013221">
    <property type="entry name" value="Mur_ligase_cen"/>
</dbReference>
<dbReference type="InterPro" id="IPR000713">
    <property type="entry name" value="Mur_ligase_N"/>
</dbReference>
<dbReference type="InterPro" id="IPR050061">
    <property type="entry name" value="MurCDEF_pg_biosynth"/>
</dbReference>
<dbReference type="InterPro" id="IPR005758">
    <property type="entry name" value="UDP-N-AcMur_Ala_ligase_MurC"/>
</dbReference>
<dbReference type="NCBIfam" id="TIGR01082">
    <property type="entry name" value="murC"/>
    <property type="match status" value="1"/>
</dbReference>
<dbReference type="PANTHER" id="PTHR43445:SF3">
    <property type="entry name" value="UDP-N-ACETYLMURAMATE--L-ALANINE LIGASE"/>
    <property type="match status" value="1"/>
</dbReference>
<dbReference type="PANTHER" id="PTHR43445">
    <property type="entry name" value="UDP-N-ACETYLMURAMATE--L-ALANINE LIGASE-RELATED"/>
    <property type="match status" value="1"/>
</dbReference>
<dbReference type="Pfam" id="PF01225">
    <property type="entry name" value="Mur_ligase"/>
    <property type="match status" value="1"/>
</dbReference>
<dbReference type="Pfam" id="PF02875">
    <property type="entry name" value="Mur_ligase_C"/>
    <property type="match status" value="1"/>
</dbReference>
<dbReference type="Pfam" id="PF08245">
    <property type="entry name" value="Mur_ligase_M"/>
    <property type="match status" value="1"/>
</dbReference>
<dbReference type="SUPFAM" id="SSF51984">
    <property type="entry name" value="MurCD N-terminal domain"/>
    <property type="match status" value="1"/>
</dbReference>
<dbReference type="SUPFAM" id="SSF53623">
    <property type="entry name" value="MurD-like peptide ligases, catalytic domain"/>
    <property type="match status" value="1"/>
</dbReference>
<dbReference type="SUPFAM" id="SSF53244">
    <property type="entry name" value="MurD-like peptide ligases, peptide-binding domain"/>
    <property type="match status" value="1"/>
</dbReference>
<evidence type="ECO:0000255" key="1">
    <source>
        <dbReference type="HAMAP-Rule" id="MF_00046"/>
    </source>
</evidence>
<sequence length="471" mass="50847">MKLPKTIGLVHFIGIGGIGMSGIAEVLHNLGHKVQGSDQADSANVQRLRDKGIEVFVGHRAENLGEAEVVVVSTAIKKSNPELIAAREKLLPVVRRAEMLAELMRFRNAIAIGGTHGKTTTTSLVATLLEAGGLDPTVINGGIINAYGTNARMGEGEWMVVEADESDGTFLKLPADVAVITNIDPEHLDHYGNFDAVRAAFRQFVENVPFYGFGVMCLDHPEVQSLVGRIEDRKIITYGENPQADVRFKNVRIDGTRSIFDVEIRRRRTGQVIELKGLVMPMPGRHNISNATAAIAVANRLGISSADIAKGLASFGGVKRRFTLTGEWNGVQIFDDYGHHPVEIKAVLRAARESCKGRVIAVHQPHRFSRLASLFEEFAACFNDADSIFLAPVYAAGEDPIEGIDSVSLVSRIKSGGHRDARFLTSAEFLPQMVAEVAKPGDFVVLLGAGSITSWAAALPKQLEGLSGKSV</sequence>
<accession>Q1ME34</accession>
<protein>
    <recommendedName>
        <fullName evidence="1">UDP-N-acetylmuramate--L-alanine ligase</fullName>
        <ecNumber evidence="1">6.3.2.8</ecNumber>
    </recommendedName>
    <alternativeName>
        <fullName evidence="1">UDP-N-acetylmuramoyl-L-alanine synthetase</fullName>
    </alternativeName>
</protein>
<keyword id="KW-0067">ATP-binding</keyword>
<keyword id="KW-0131">Cell cycle</keyword>
<keyword id="KW-0132">Cell division</keyword>
<keyword id="KW-0133">Cell shape</keyword>
<keyword id="KW-0961">Cell wall biogenesis/degradation</keyword>
<keyword id="KW-0963">Cytoplasm</keyword>
<keyword id="KW-0436">Ligase</keyword>
<keyword id="KW-0547">Nucleotide-binding</keyword>
<keyword id="KW-0573">Peptidoglycan synthesis</keyword>
<comment type="function">
    <text evidence="1">Cell wall formation.</text>
</comment>
<comment type="catalytic activity">
    <reaction evidence="1">
        <text>UDP-N-acetyl-alpha-D-muramate + L-alanine + ATP = UDP-N-acetyl-alpha-D-muramoyl-L-alanine + ADP + phosphate + H(+)</text>
        <dbReference type="Rhea" id="RHEA:23372"/>
        <dbReference type="ChEBI" id="CHEBI:15378"/>
        <dbReference type="ChEBI" id="CHEBI:30616"/>
        <dbReference type="ChEBI" id="CHEBI:43474"/>
        <dbReference type="ChEBI" id="CHEBI:57972"/>
        <dbReference type="ChEBI" id="CHEBI:70757"/>
        <dbReference type="ChEBI" id="CHEBI:83898"/>
        <dbReference type="ChEBI" id="CHEBI:456216"/>
        <dbReference type="EC" id="6.3.2.8"/>
    </reaction>
</comment>
<comment type="pathway">
    <text evidence="1">Cell wall biogenesis; peptidoglycan biosynthesis.</text>
</comment>
<comment type="subcellular location">
    <subcellularLocation>
        <location evidence="1">Cytoplasm</location>
    </subcellularLocation>
</comment>
<comment type="similarity">
    <text evidence="1">Belongs to the MurCDEF family.</text>
</comment>
<proteinExistence type="inferred from homology"/>